<proteinExistence type="inferred from homology"/>
<reference key="1">
    <citation type="submission" date="1994-03" db="EMBL/GenBank/DDBJ databases">
        <authorList>
            <person name="Smith D.R."/>
            <person name="Robison K."/>
        </authorList>
    </citation>
    <scope>NUCLEOTIDE SEQUENCE [GENOMIC DNA]</scope>
</reference>
<reference key="2">
    <citation type="journal article" date="2001" name="Nature">
        <title>Massive gene decay in the leprosy bacillus.</title>
        <authorList>
            <person name="Cole S.T."/>
            <person name="Eiglmeier K."/>
            <person name="Parkhill J."/>
            <person name="James K.D."/>
            <person name="Thomson N.R."/>
            <person name="Wheeler P.R."/>
            <person name="Honore N."/>
            <person name="Garnier T."/>
            <person name="Churcher C.M."/>
            <person name="Harris D.E."/>
            <person name="Mungall K.L."/>
            <person name="Basham D."/>
            <person name="Brown D."/>
            <person name="Chillingworth T."/>
            <person name="Connor R."/>
            <person name="Davies R.M."/>
            <person name="Devlin K."/>
            <person name="Duthoy S."/>
            <person name="Feltwell T."/>
            <person name="Fraser A."/>
            <person name="Hamlin N."/>
            <person name="Holroyd S."/>
            <person name="Hornsby T."/>
            <person name="Jagels K."/>
            <person name="Lacroix C."/>
            <person name="Maclean J."/>
            <person name="Moule S."/>
            <person name="Murphy L.D."/>
            <person name="Oliver K."/>
            <person name="Quail M.A."/>
            <person name="Rajandream M.A."/>
            <person name="Rutherford K.M."/>
            <person name="Rutter S."/>
            <person name="Seeger K."/>
            <person name="Simon S."/>
            <person name="Simmonds M."/>
            <person name="Skelton J."/>
            <person name="Squares R."/>
            <person name="Squares S."/>
            <person name="Stevens K."/>
            <person name="Taylor K."/>
            <person name="Whitehead S."/>
            <person name="Woodward J.R."/>
            <person name="Barrell B.G."/>
        </authorList>
    </citation>
    <scope>NUCLEOTIDE SEQUENCE [LARGE SCALE GENOMIC DNA]</scope>
    <source>
        <strain>TN</strain>
    </source>
</reference>
<evidence type="ECO:0000250" key="1"/>
<evidence type="ECO:0000255" key="2"/>
<evidence type="ECO:0000305" key="3"/>
<gene>
    <name type="primary">secG</name>
    <name type="ordered locus">ML0577</name>
    <name type="ORF">B1496_C3_206</name>
</gene>
<sequence length="77" mass="8151">MELALQITLVVTSILVVLLVLLHRAKGGGLSTLFGGGVQSSLSGSTVVEKNLDRLTLFVTGIWLVSIIGVALLTKYR</sequence>
<comment type="function">
    <text evidence="1">Involved in protein export. Participates in an early event of protein translocation (By similarity).</text>
</comment>
<comment type="subcellular location">
    <subcellularLocation>
        <location evidence="3">Cell membrane</location>
        <topology evidence="3">Multi-pass membrane protein</topology>
    </subcellularLocation>
</comment>
<comment type="similarity">
    <text evidence="3">Belongs to the SecG family.</text>
</comment>
<dbReference type="EMBL" id="U00013">
    <property type="protein sequence ID" value="AAA17131.1"/>
    <property type="molecule type" value="Genomic_DNA"/>
</dbReference>
<dbReference type="EMBL" id="AL583919">
    <property type="protein sequence ID" value="CAC30085.1"/>
    <property type="molecule type" value="Genomic_DNA"/>
</dbReference>
<dbReference type="PIR" id="S72764">
    <property type="entry name" value="S72764"/>
</dbReference>
<dbReference type="RefSeq" id="NP_301489.1">
    <property type="nucleotide sequence ID" value="NC_002677.1"/>
</dbReference>
<dbReference type="RefSeq" id="WP_010907813.1">
    <property type="nucleotide sequence ID" value="NC_002677.1"/>
</dbReference>
<dbReference type="STRING" id="272631.gene:17574398"/>
<dbReference type="KEGG" id="mle:ML0577"/>
<dbReference type="PATRIC" id="fig|272631.5.peg.1006"/>
<dbReference type="Leproma" id="ML0577"/>
<dbReference type="eggNOG" id="COG1314">
    <property type="taxonomic scope" value="Bacteria"/>
</dbReference>
<dbReference type="HOGENOM" id="CLU_094156_7_1_11"/>
<dbReference type="OrthoDB" id="4337190at2"/>
<dbReference type="Proteomes" id="UP000000806">
    <property type="component" value="Chromosome"/>
</dbReference>
<dbReference type="GO" id="GO:0005886">
    <property type="term" value="C:plasma membrane"/>
    <property type="evidence" value="ECO:0007669"/>
    <property type="project" value="UniProtKB-SubCell"/>
</dbReference>
<dbReference type="GO" id="GO:0015450">
    <property type="term" value="F:protein-transporting ATPase activity"/>
    <property type="evidence" value="ECO:0007669"/>
    <property type="project" value="InterPro"/>
</dbReference>
<dbReference type="GO" id="GO:0009306">
    <property type="term" value="P:protein secretion"/>
    <property type="evidence" value="ECO:0007669"/>
    <property type="project" value="InterPro"/>
</dbReference>
<dbReference type="InterPro" id="IPR004692">
    <property type="entry name" value="SecG"/>
</dbReference>
<dbReference type="NCBIfam" id="TIGR00810">
    <property type="entry name" value="secG"/>
    <property type="match status" value="1"/>
</dbReference>
<dbReference type="Pfam" id="PF03840">
    <property type="entry name" value="SecG"/>
    <property type="match status" value="1"/>
</dbReference>
<dbReference type="PRINTS" id="PR01651">
    <property type="entry name" value="SECGEXPORT"/>
</dbReference>
<protein>
    <recommendedName>
        <fullName>Probable protein-export membrane protein SecG</fullName>
    </recommendedName>
</protein>
<keyword id="KW-1003">Cell membrane</keyword>
<keyword id="KW-0472">Membrane</keyword>
<keyword id="KW-0653">Protein transport</keyword>
<keyword id="KW-1185">Reference proteome</keyword>
<keyword id="KW-0811">Translocation</keyword>
<keyword id="KW-0812">Transmembrane</keyword>
<keyword id="KW-1133">Transmembrane helix</keyword>
<keyword id="KW-0813">Transport</keyword>
<feature type="chain" id="PRO_0000157234" description="Probable protein-export membrane protein SecG">
    <location>
        <begin position="1"/>
        <end position="77"/>
    </location>
</feature>
<feature type="transmembrane region" description="Helical" evidence="2">
    <location>
        <begin position="3"/>
        <end position="23"/>
    </location>
</feature>
<feature type="transmembrane region" description="Helical" evidence="2">
    <location>
        <begin position="55"/>
        <end position="75"/>
    </location>
</feature>
<organism>
    <name type="scientific">Mycobacterium leprae (strain TN)</name>
    <dbReference type="NCBI Taxonomy" id="272631"/>
    <lineage>
        <taxon>Bacteria</taxon>
        <taxon>Bacillati</taxon>
        <taxon>Actinomycetota</taxon>
        <taxon>Actinomycetes</taxon>
        <taxon>Mycobacteriales</taxon>
        <taxon>Mycobacteriaceae</taxon>
        <taxon>Mycobacterium</taxon>
    </lineage>
</organism>
<accession>P38388</accession>
<name>SECG_MYCLE</name>